<comment type="function">
    <text evidence="1">NDH-1 shuttles electrons from an unknown electron donor, via FMN and iron-sulfur (Fe-S) centers, to quinones in the respiratory and/or the photosynthetic chain. The immediate electron acceptor for the enzyme in this species is believed to be plastoquinone. Couples the redox reaction to proton translocation, and thus conserves the redox energy in a proton gradient. Cyanobacterial NDH-1 also plays a role in inorganic carbon-concentration.</text>
</comment>
<comment type="catalytic activity">
    <reaction evidence="1">
        <text>a plastoquinone + NADH + (n+1) H(+)(in) = a plastoquinol + NAD(+) + n H(+)(out)</text>
        <dbReference type="Rhea" id="RHEA:42608"/>
        <dbReference type="Rhea" id="RHEA-COMP:9561"/>
        <dbReference type="Rhea" id="RHEA-COMP:9562"/>
        <dbReference type="ChEBI" id="CHEBI:15378"/>
        <dbReference type="ChEBI" id="CHEBI:17757"/>
        <dbReference type="ChEBI" id="CHEBI:57540"/>
        <dbReference type="ChEBI" id="CHEBI:57945"/>
        <dbReference type="ChEBI" id="CHEBI:62192"/>
    </reaction>
</comment>
<comment type="catalytic activity">
    <reaction evidence="1">
        <text>a plastoquinone + NADPH + (n+1) H(+)(in) = a plastoquinol + NADP(+) + n H(+)(out)</text>
        <dbReference type="Rhea" id="RHEA:42612"/>
        <dbReference type="Rhea" id="RHEA-COMP:9561"/>
        <dbReference type="Rhea" id="RHEA-COMP:9562"/>
        <dbReference type="ChEBI" id="CHEBI:15378"/>
        <dbReference type="ChEBI" id="CHEBI:17757"/>
        <dbReference type="ChEBI" id="CHEBI:57783"/>
        <dbReference type="ChEBI" id="CHEBI:58349"/>
        <dbReference type="ChEBI" id="CHEBI:62192"/>
    </reaction>
</comment>
<comment type="subunit">
    <text evidence="1">NDH-1 can be composed of about 15 different subunits; different subcomplexes with different compositions have been identified which probably have different functions.</text>
</comment>
<comment type="subcellular location">
    <subcellularLocation>
        <location evidence="1">Cellular thylakoid membrane</location>
        <topology evidence="1">Peripheral membrane protein</topology>
        <orientation evidence="1">Cytoplasmic side</orientation>
    </subcellularLocation>
</comment>
<comment type="similarity">
    <text evidence="1">Belongs to the complex I NdhO subunit family.</text>
</comment>
<keyword id="KW-0472">Membrane</keyword>
<keyword id="KW-0520">NAD</keyword>
<keyword id="KW-0521">NADP</keyword>
<keyword id="KW-0618">Plastoquinone</keyword>
<keyword id="KW-0874">Quinone</keyword>
<keyword id="KW-1185">Reference proteome</keyword>
<keyword id="KW-0793">Thylakoid</keyword>
<keyword id="KW-1278">Translocase</keyword>
<keyword id="KW-0813">Transport</keyword>
<sequence length="72" mass="8249">MAAKIKKGALVRVVKEKLENSLEAKASDSRFPSYLFDSKGEIIEMNDEYALIRFYVPTPSVWLRLDQLEAVE</sequence>
<gene>
    <name evidence="1" type="primary">ndhO</name>
    <name type="ordered locus">cce_1849</name>
</gene>
<accession>B1WZP7</accession>
<dbReference type="EC" id="7.1.1.-" evidence="1"/>
<dbReference type="EMBL" id="CP000806">
    <property type="protein sequence ID" value="ACB51199.1"/>
    <property type="molecule type" value="Genomic_DNA"/>
</dbReference>
<dbReference type="RefSeq" id="WP_009545661.1">
    <property type="nucleotide sequence ID" value="NC_010546.1"/>
</dbReference>
<dbReference type="SMR" id="B1WZP7"/>
<dbReference type="STRING" id="43989.cce_1849"/>
<dbReference type="KEGG" id="cyt:cce_1849"/>
<dbReference type="eggNOG" id="ENOG5032XZT">
    <property type="taxonomic scope" value="Bacteria"/>
</dbReference>
<dbReference type="HOGENOM" id="CLU_195299_0_0_3"/>
<dbReference type="OrthoDB" id="426633at2"/>
<dbReference type="Proteomes" id="UP000001203">
    <property type="component" value="Chromosome circular"/>
</dbReference>
<dbReference type="GO" id="GO:0031676">
    <property type="term" value="C:plasma membrane-derived thylakoid membrane"/>
    <property type="evidence" value="ECO:0007669"/>
    <property type="project" value="UniProtKB-SubCell"/>
</dbReference>
<dbReference type="GO" id="GO:0016655">
    <property type="term" value="F:oxidoreductase activity, acting on NAD(P)H, quinone or similar compound as acceptor"/>
    <property type="evidence" value="ECO:0007669"/>
    <property type="project" value="UniProtKB-UniRule"/>
</dbReference>
<dbReference type="GO" id="GO:0048038">
    <property type="term" value="F:quinone binding"/>
    <property type="evidence" value="ECO:0007669"/>
    <property type="project" value="UniProtKB-KW"/>
</dbReference>
<dbReference type="HAMAP" id="MF_01354">
    <property type="entry name" value="NDH1_NDH1O"/>
    <property type="match status" value="1"/>
</dbReference>
<dbReference type="InterPro" id="IPR020905">
    <property type="entry name" value="NdhO"/>
</dbReference>
<dbReference type="Pfam" id="PF11910">
    <property type="entry name" value="NdhO"/>
    <property type="match status" value="1"/>
</dbReference>
<proteinExistence type="inferred from homology"/>
<protein>
    <recommendedName>
        <fullName evidence="1">NAD(P)H-quinone oxidoreductase subunit O</fullName>
        <ecNumber evidence="1">7.1.1.-</ecNumber>
    </recommendedName>
    <alternativeName>
        <fullName evidence="1">NAD(P)H dehydrogenase I subunit O</fullName>
    </alternativeName>
    <alternativeName>
        <fullName>NDH-1 subunit O</fullName>
    </alternativeName>
    <alternativeName>
        <fullName>NDH-O</fullName>
    </alternativeName>
</protein>
<feature type="chain" id="PRO_0000353634" description="NAD(P)H-quinone oxidoreductase subunit O">
    <location>
        <begin position="1"/>
        <end position="72"/>
    </location>
</feature>
<evidence type="ECO:0000255" key="1">
    <source>
        <dbReference type="HAMAP-Rule" id="MF_01354"/>
    </source>
</evidence>
<reference key="1">
    <citation type="journal article" date="2008" name="Proc. Natl. Acad. Sci. U.S.A.">
        <title>The genome of Cyanothece 51142, a unicellular diazotrophic cyanobacterium important in the marine nitrogen cycle.</title>
        <authorList>
            <person name="Welsh E.A."/>
            <person name="Liberton M."/>
            <person name="Stoeckel J."/>
            <person name="Loh T."/>
            <person name="Elvitigala T."/>
            <person name="Wang C."/>
            <person name="Wollam A."/>
            <person name="Fulton R.S."/>
            <person name="Clifton S.W."/>
            <person name="Jacobs J.M."/>
            <person name="Aurora R."/>
            <person name="Ghosh B.K."/>
            <person name="Sherman L.A."/>
            <person name="Smith R.D."/>
            <person name="Wilson R.K."/>
            <person name="Pakrasi H.B."/>
        </authorList>
    </citation>
    <scope>NUCLEOTIDE SEQUENCE [LARGE SCALE GENOMIC DNA]</scope>
    <source>
        <strain>ATCC 51142 / BH68</strain>
    </source>
</reference>
<name>NDHO_CROS5</name>
<organism>
    <name type="scientific">Crocosphaera subtropica (strain ATCC 51142 / BH68)</name>
    <name type="common">Cyanothece sp. (strain ATCC 51142)</name>
    <dbReference type="NCBI Taxonomy" id="43989"/>
    <lineage>
        <taxon>Bacteria</taxon>
        <taxon>Bacillati</taxon>
        <taxon>Cyanobacteriota</taxon>
        <taxon>Cyanophyceae</taxon>
        <taxon>Oscillatoriophycideae</taxon>
        <taxon>Chroococcales</taxon>
        <taxon>Aphanothecaceae</taxon>
        <taxon>Crocosphaera</taxon>
        <taxon>Crocosphaera subtropica</taxon>
    </lineage>
</organism>